<gene>
    <name type="ordered locus">SAB1435c</name>
</gene>
<dbReference type="EC" id="2.7.11.32" evidence="1"/>
<dbReference type="EC" id="2.7.4.27" evidence="1"/>
<dbReference type="EMBL" id="AJ938182">
    <property type="protein sequence ID" value="CAI81124.1"/>
    <property type="molecule type" value="Genomic_DNA"/>
</dbReference>
<dbReference type="RefSeq" id="WP_000411298.1">
    <property type="nucleotide sequence ID" value="NC_007622.1"/>
</dbReference>
<dbReference type="SMR" id="Q2YT16"/>
<dbReference type="KEGG" id="sab:SAB1435c"/>
<dbReference type="HOGENOM" id="CLU_046206_2_1_9"/>
<dbReference type="GO" id="GO:0043531">
    <property type="term" value="F:ADP binding"/>
    <property type="evidence" value="ECO:0007669"/>
    <property type="project" value="UniProtKB-UniRule"/>
</dbReference>
<dbReference type="GO" id="GO:0005524">
    <property type="term" value="F:ATP binding"/>
    <property type="evidence" value="ECO:0007669"/>
    <property type="project" value="InterPro"/>
</dbReference>
<dbReference type="GO" id="GO:0016776">
    <property type="term" value="F:phosphotransferase activity, phosphate group as acceptor"/>
    <property type="evidence" value="ECO:0007669"/>
    <property type="project" value="UniProtKB-UniRule"/>
</dbReference>
<dbReference type="GO" id="GO:0004674">
    <property type="term" value="F:protein serine/threonine kinase activity"/>
    <property type="evidence" value="ECO:0007669"/>
    <property type="project" value="UniProtKB-UniRule"/>
</dbReference>
<dbReference type="HAMAP" id="MF_00921">
    <property type="entry name" value="PDRP"/>
    <property type="match status" value="1"/>
</dbReference>
<dbReference type="InterPro" id="IPR005177">
    <property type="entry name" value="Kinase-pyrophosphorylase"/>
</dbReference>
<dbReference type="InterPro" id="IPR026565">
    <property type="entry name" value="PPDK_reg"/>
</dbReference>
<dbReference type="NCBIfam" id="NF003742">
    <property type="entry name" value="PRK05339.1"/>
    <property type="match status" value="1"/>
</dbReference>
<dbReference type="PANTHER" id="PTHR31756">
    <property type="entry name" value="PYRUVATE, PHOSPHATE DIKINASE REGULATORY PROTEIN 1, CHLOROPLASTIC"/>
    <property type="match status" value="1"/>
</dbReference>
<dbReference type="PANTHER" id="PTHR31756:SF3">
    <property type="entry name" value="PYRUVATE, PHOSPHATE DIKINASE REGULATORY PROTEIN 1, CHLOROPLASTIC"/>
    <property type="match status" value="1"/>
</dbReference>
<dbReference type="Pfam" id="PF03618">
    <property type="entry name" value="Kinase-PPPase"/>
    <property type="match status" value="1"/>
</dbReference>
<reference key="1">
    <citation type="journal article" date="2007" name="PLoS ONE">
        <title>Molecular correlates of host specialization in Staphylococcus aureus.</title>
        <authorList>
            <person name="Herron-Olson L."/>
            <person name="Fitzgerald J.R."/>
            <person name="Musser J.M."/>
            <person name="Kapur V."/>
        </authorList>
    </citation>
    <scope>NUCLEOTIDE SEQUENCE [LARGE SCALE GENOMIC DNA]</scope>
    <source>
        <strain>bovine RF122 / ET3-1</strain>
    </source>
</reference>
<comment type="function">
    <text evidence="1">Bifunctional serine/threonine kinase and phosphorylase involved in the regulation of the pyruvate, phosphate dikinase (PPDK) by catalyzing its phosphorylation/dephosphorylation.</text>
</comment>
<comment type="catalytic activity">
    <reaction evidence="1">
        <text>N(tele)-phospho-L-histidyl/L-threonyl-[pyruvate, phosphate dikinase] + ADP = N(tele)-phospho-L-histidyl/O-phospho-L-threonyl-[pyruvate, phosphate dikinase] + AMP + H(+)</text>
        <dbReference type="Rhea" id="RHEA:43692"/>
        <dbReference type="Rhea" id="RHEA-COMP:10650"/>
        <dbReference type="Rhea" id="RHEA-COMP:10651"/>
        <dbReference type="ChEBI" id="CHEBI:15378"/>
        <dbReference type="ChEBI" id="CHEBI:30013"/>
        <dbReference type="ChEBI" id="CHEBI:61977"/>
        <dbReference type="ChEBI" id="CHEBI:83586"/>
        <dbReference type="ChEBI" id="CHEBI:456215"/>
        <dbReference type="ChEBI" id="CHEBI:456216"/>
        <dbReference type="EC" id="2.7.11.32"/>
    </reaction>
</comment>
<comment type="catalytic activity">
    <reaction evidence="1">
        <text>N(tele)-phospho-L-histidyl/O-phospho-L-threonyl-[pyruvate, phosphate dikinase] + phosphate + H(+) = N(tele)-phospho-L-histidyl/L-threonyl-[pyruvate, phosphate dikinase] + diphosphate</text>
        <dbReference type="Rhea" id="RHEA:43696"/>
        <dbReference type="Rhea" id="RHEA-COMP:10650"/>
        <dbReference type="Rhea" id="RHEA-COMP:10651"/>
        <dbReference type="ChEBI" id="CHEBI:15378"/>
        <dbReference type="ChEBI" id="CHEBI:30013"/>
        <dbReference type="ChEBI" id="CHEBI:33019"/>
        <dbReference type="ChEBI" id="CHEBI:43474"/>
        <dbReference type="ChEBI" id="CHEBI:61977"/>
        <dbReference type="ChEBI" id="CHEBI:83586"/>
        <dbReference type="EC" id="2.7.4.27"/>
    </reaction>
</comment>
<comment type="similarity">
    <text evidence="1">Belongs to the pyruvate, phosphate/water dikinase regulatory protein family. PDRP subfamily.</text>
</comment>
<feature type="chain" id="PRO_0000316746" description="Putative pyruvate, phosphate dikinase regulatory protein">
    <location>
        <begin position="1"/>
        <end position="272"/>
    </location>
</feature>
<feature type="binding site" evidence="1">
    <location>
        <begin position="151"/>
        <end position="158"/>
    </location>
    <ligand>
        <name>ADP</name>
        <dbReference type="ChEBI" id="CHEBI:456216"/>
    </ligand>
</feature>
<evidence type="ECO:0000255" key="1">
    <source>
        <dbReference type="HAMAP-Rule" id="MF_00921"/>
    </source>
</evidence>
<sequence length="272" mass="30785">MEKIKIIVASDSIGETAELVARAGISQFNPKQCKNELLRYPYIESFEDVDEVIQVAKDTNAIIVYTLIKPEMKQYMSEKVAEFQLKSVDIMGPLMDLLSASVEEKPYNEPGIVHRLDDAYFKKIDAIEFAVKYDDGKDPKGLPKADIVLLGISRTSKTPLSQYLAHKSYKVMNVPIVPEVTPPDGLYDIDPKKCIALKISEEKLNRIRKERLKQLGLGDTARYATEARIQEELNYFEEIVSEIGCPVIDVSQKAIEETANDIIHYIEQNKSK</sequence>
<organism>
    <name type="scientific">Staphylococcus aureus (strain bovine RF122 / ET3-1)</name>
    <dbReference type="NCBI Taxonomy" id="273036"/>
    <lineage>
        <taxon>Bacteria</taxon>
        <taxon>Bacillati</taxon>
        <taxon>Bacillota</taxon>
        <taxon>Bacilli</taxon>
        <taxon>Bacillales</taxon>
        <taxon>Staphylococcaceae</taxon>
        <taxon>Staphylococcus</taxon>
    </lineage>
</organism>
<proteinExistence type="inferred from homology"/>
<keyword id="KW-0418">Kinase</keyword>
<keyword id="KW-0547">Nucleotide-binding</keyword>
<keyword id="KW-0723">Serine/threonine-protein kinase</keyword>
<keyword id="KW-0808">Transferase</keyword>
<accession>Q2YT16</accession>
<protein>
    <recommendedName>
        <fullName evidence="1">Putative pyruvate, phosphate dikinase regulatory protein</fullName>
        <shortName evidence="1">PPDK regulatory protein</shortName>
        <ecNumber evidence="1">2.7.11.32</ecNumber>
        <ecNumber evidence="1">2.7.4.27</ecNumber>
    </recommendedName>
</protein>
<name>PDRP_STAAB</name>